<proteinExistence type="evidence at protein level"/>
<evidence type="ECO:0000250" key="1">
    <source>
        <dbReference type="UniProtKB" id="P84371"/>
    </source>
</evidence>
<evidence type="ECO:0000255" key="2"/>
<evidence type="ECO:0000269" key="3">
    <source>
    </source>
</evidence>
<evidence type="ECO:0000305" key="4"/>
<keyword id="KW-0027">Amidation</keyword>
<keyword id="KW-0903">Direct protein sequencing</keyword>
<keyword id="KW-0527">Neuropeptide</keyword>
<keyword id="KW-0964">Secreted</keyword>
<reference evidence="4" key="1">
    <citation type="journal article" date="2003" name="Biochem. Biophys. Res. Commun.">
        <title>Mass spectrometric analysis of the perisympathetic organs in locusts: identification of novel periviscerokinins.</title>
        <authorList>
            <person name="Clynen E."/>
            <person name="Huybrechts J."/>
            <person name="De Loof A."/>
            <person name="Schoofs L."/>
        </authorList>
    </citation>
    <scope>PROTEIN SEQUENCE</scope>
    <scope>TISSUE SPECIFICITY</scope>
    <scope>MASS SPECTROMETRY</scope>
    <scope>AMIDATION AT VAL-15</scope>
    <source>
        <tissue evidence="3">Abdominal perisympathetic organs</tissue>
    </source>
</reference>
<accession>P85867</accession>
<dbReference type="GO" id="GO:0005576">
    <property type="term" value="C:extracellular region"/>
    <property type="evidence" value="ECO:0007669"/>
    <property type="project" value="UniProtKB-SubCell"/>
</dbReference>
<dbReference type="GO" id="GO:0007218">
    <property type="term" value="P:neuropeptide signaling pathway"/>
    <property type="evidence" value="ECO:0007669"/>
    <property type="project" value="UniProtKB-KW"/>
</dbReference>
<protein>
    <recommendedName>
        <fullName>Pyrokinin</fullName>
    </recommendedName>
    <alternativeName>
        <fullName>Capa-Pk</fullName>
    </alternativeName>
    <alternativeName>
        <fullName>Lom-PVK-3</fullName>
    </alternativeName>
</protein>
<feature type="peptide" id="PRO_0000343527" description="Pyrokinin" evidence="3">
    <location>
        <begin position="1"/>
        <end position="15"/>
    </location>
</feature>
<feature type="modified residue" description="Valine amide" evidence="3">
    <location>
        <position position="15"/>
    </location>
</feature>
<organism>
    <name type="scientific">Locusta migratoria</name>
    <name type="common">Migratory locust</name>
    <dbReference type="NCBI Taxonomy" id="7004"/>
    <lineage>
        <taxon>Eukaryota</taxon>
        <taxon>Metazoa</taxon>
        <taxon>Ecdysozoa</taxon>
        <taxon>Arthropoda</taxon>
        <taxon>Hexapoda</taxon>
        <taxon>Insecta</taxon>
        <taxon>Pterygota</taxon>
        <taxon>Neoptera</taxon>
        <taxon>Polyneoptera</taxon>
        <taxon>Orthoptera</taxon>
        <taxon>Caelifera</taxon>
        <taxon>Acrididea</taxon>
        <taxon>Acridomorpha</taxon>
        <taxon>Acridoidea</taxon>
        <taxon>Acrididae</taxon>
        <taxon>Oedipodinae</taxon>
        <taxon>Locusta</taxon>
    </lineage>
</organism>
<name>PPK_LOCMI</name>
<sequence length="15" mass="1569">DGGEPAAPLWFGPRV</sequence>
<comment type="function">
    <text evidence="1">Myoactive.</text>
</comment>
<comment type="subcellular location">
    <subcellularLocation>
        <location evidence="4">Secreted</location>
    </subcellularLocation>
</comment>
<comment type="tissue specificity">
    <text evidence="3">Found in the abdominal ganglia and perisympathetic organs. Not detected in the thoracic ganglia, subesophageal ganglion, corpora cardiaca, corpora allata, hypocerebral ganglion or frontal ganglion.</text>
</comment>
<comment type="mass spectrometry" mass="1566.8" method="MALDI" evidence="3"/>
<comment type="similarity">
    <text evidence="2">Belongs to the pyrokinin family.</text>
</comment>